<gene>
    <name type="ordered locus">RPE_0380</name>
</gene>
<sequence>MPTDGSYFHLHLVSDSTGETLITVSRAVSAQYANVSPVEHVYPLVRSQKQLDRVLAEIEEAPGIVLFTLLEQDLVERLEKKCQDINIPSLSIIGPVMQLFQAYLGSSTTGRVGAQHTLNAEYFKRIDALNYSMMHDDGQHAEGLEEADVVLVGVSRTSKTPTSIYLANRGIRTANVPLVPGIPIPHQLESLVKPLVVSLHATPERLIQVRQNRLLSIGAAIGNEDYIDRQTVTDEVSYARRLSAKYGWALLEVTRRSIEETAAAVMKLLADRQRQRPVE</sequence>
<organism>
    <name type="scientific">Rhodopseudomonas palustris (strain BisA53)</name>
    <dbReference type="NCBI Taxonomy" id="316055"/>
    <lineage>
        <taxon>Bacteria</taxon>
        <taxon>Pseudomonadati</taxon>
        <taxon>Pseudomonadota</taxon>
        <taxon>Alphaproteobacteria</taxon>
        <taxon>Hyphomicrobiales</taxon>
        <taxon>Nitrobacteraceae</taxon>
        <taxon>Rhodopseudomonas</taxon>
    </lineage>
</organism>
<accession>Q07UP5</accession>
<proteinExistence type="inferred from homology"/>
<protein>
    <recommendedName>
        <fullName evidence="1">Putative pyruvate, phosphate dikinase regulatory protein</fullName>
        <shortName evidence="1">PPDK regulatory protein</shortName>
        <ecNumber evidence="1">2.7.11.32</ecNumber>
        <ecNumber evidence="1">2.7.4.27</ecNumber>
    </recommendedName>
</protein>
<evidence type="ECO:0000255" key="1">
    <source>
        <dbReference type="HAMAP-Rule" id="MF_00921"/>
    </source>
</evidence>
<name>PDRP_RHOP5</name>
<feature type="chain" id="PRO_0000316725" description="Putative pyruvate, phosphate dikinase regulatory protein">
    <location>
        <begin position="1"/>
        <end position="279"/>
    </location>
</feature>
<feature type="binding site" evidence="1">
    <location>
        <begin position="153"/>
        <end position="160"/>
    </location>
    <ligand>
        <name>ADP</name>
        <dbReference type="ChEBI" id="CHEBI:456216"/>
    </ligand>
</feature>
<reference key="1">
    <citation type="submission" date="2006-09" db="EMBL/GenBank/DDBJ databases">
        <title>Complete sequence of Rhodopseudomonas palustris BisA53.</title>
        <authorList>
            <consortium name="US DOE Joint Genome Institute"/>
            <person name="Copeland A."/>
            <person name="Lucas S."/>
            <person name="Lapidus A."/>
            <person name="Barry K."/>
            <person name="Detter J.C."/>
            <person name="Glavina del Rio T."/>
            <person name="Hammon N."/>
            <person name="Israni S."/>
            <person name="Dalin E."/>
            <person name="Tice H."/>
            <person name="Pitluck S."/>
            <person name="Chain P."/>
            <person name="Malfatti S."/>
            <person name="Shin M."/>
            <person name="Vergez L."/>
            <person name="Schmutz J."/>
            <person name="Larimer F."/>
            <person name="Land M."/>
            <person name="Hauser L."/>
            <person name="Pelletier D.A."/>
            <person name="Kyrpides N."/>
            <person name="Kim E."/>
            <person name="Harwood C.S."/>
            <person name="Oda Y."/>
            <person name="Richardson P."/>
        </authorList>
    </citation>
    <scope>NUCLEOTIDE SEQUENCE [LARGE SCALE GENOMIC DNA]</scope>
    <source>
        <strain>BisA53</strain>
    </source>
</reference>
<dbReference type="EC" id="2.7.11.32" evidence="1"/>
<dbReference type="EC" id="2.7.4.27" evidence="1"/>
<dbReference type="EMBL" id="CP000463">
    <property type="protein sequence ID" value="ABJ04339.1"/>
    <property type="molecule type" value="Genomic_DNA"/>
</dbReference>
<dbReference type="SMR" id="Q07UP5"/>
<dbReference type="STRING" id="316055.RPE_0380"/>
<dbReference type="KEGG" id="rpe:RPE_0380"/>
<dbReference type="eggNOG" id="COG1806">
    <property type="taxonomic scope" value="Bacteria"/>
</dbReference>
<dbReference type="HOGENOM" id="CLU_046206_2_0_5"/>
<dbReference type="OrthoDB" id="9782201at2"/>
<dbReference type="GO" id="GO:0043531">
    <property type="term" value="F:ADP binding"/>
    <property type="evidence" value="ECO:0007669"/>
    <property type="project" value="UniProtKB-UniRule"/>
</dbReference>
<dbReference type="GO" id="GO:0005524">
    <property type="term" value="F:ATP binding"/>
    <property type="evidence" value="ECO:0007669"/>
    <property type="project" value="InterPro"/>
</dbReference>
<dbReference type="GO" id="GO:0016776">
    <property type="term" value="F:phosphotransferase activity, phosphate group as acceptor"/>
    <property type="evidence" value="ECO:0007669"/>
    <property type="project" value="UniProtKB-UniRule"/>
</dbReference>
<dbReference type="GO" id="GO:0004674">
    <property type="term" value="F:protein serine/threonine kinase activity"/>
    <property type="evidence" value="ECO:0007669"/>
    <property type="project" value="UniProtKB-UniRule"/>
</dbReference>
<dbReference type="HAMAP" id="MF_00921">
    <property type="entry name" value="PDRP"/>
    <property type="match status" value="1"/>
</dbReference>
<dbReference type="InterPro" id="IPR005177">
    <property type="entry name" value="Kinase-pyrophosphorylase"/>
</dbReference>
<dbReference type="InterPro" id="IPR026565">
    <property type="entry name" value="PPDK_reg"/>
</dbReference>
<dbReference type="NCBIfam" id="NF003742">
    <property type="entry name" value="PRK05339.1"/>
    <property type="match status" value="1"/>
</dbReference>
<dbReference type="PANTHER" id="PTHR31756">
    <property type="entry name" value="PYRUVATE, PHOSPHATE DIKINASE REGULATORY PROTEIN 1, CHLOROPLASTIC"/>
    <property type="match status" value="1"/>
</dbReference>
<dbReference type="PANTHER" id="PTHR31756:SF3">
    <property type="entry name" value="PYRUVATE, PHOSPHATE DIKINASE REGULATORY PROTEIN 1, CHLOROPLASTIC"/>
    <property type="match status" value="1"/>
</dbReference>
<dbReference type="Pfam" id="PF03618">
    <property type="entry name" value="Kinase-PPPase"/>
    <property type="match status" value="1"/>
</dbReference>
<keyword id="KW-0418">Kinase</keyword>
<keyword id="KW-0547">Nucleotide-binding</keyword>
<keyword id="KW-0723">Serine/threonine-protein kinase</keyword>
<keyword id="KW-0808">Transferase</keyword>
<comment type="function">
    <text evidence="1">Bifunctional serine/threonine kinase and phosphorylase involved in the regulation of the pyruvate, phosphate dikinase (PPDK) by catalyzing its phosphorylation/dephosphorylation.</text>
</comment>
<comment type="catalytic activity">
    <reaction evidence="1">
        <text>N(tele)-phospho-L-histidyl/L-threonyl-[pyruvate, phosphate dikinase] + ADP = N(tele)-phospho-L-histidyl/O-phospho-L-threonyl-[pyruvate, phosphate dikinase] + AMP + H(+)</text>
        <dbReference type="Rhea" id="RHEA:43692"/>
        <dbReference type="Rhea" id="RHEA-COMP:10650"/>
        <dbReference type="Rhea" id="RHEA-COMP:10651"/>
        <dbReference type="ChEBI" id="CHEBI:15378"/>
        <dbReference type="ChEBI" id="CHEBI:30013"/>
        <dbReference type="ChEBI" id="CHEBI:61977"/>
        <dbReference type="ChEBI" id="CHEBI:83586"/>
        <dbReference type="ChEBI" id="CHEBI:456215"/>
        <dbReference type="ChEBI" id="CHEBI:456216"/>
        <dbReference type="EC" id="2.7.11.32"/>
    </reaction>
</comment>
<comment type="catalytic activity">
    <reaction evidence="1">
        <text>N(tele)-phospho-L-histidyl/O-phospho-L-threonyl-[pyruvate, phosphate dikinase] + phosphate + H(+) = N(tele)-phospho-L-histidyl/L-threonyl-[pyruvate, phosphate dikinase] + diphosphate</text>
        <dbReference type="Rhea" id="RHEA:43696"/>
        <dbReference type="Rhea" id="RHEA-COMP:10650"/>
        <dbReference type="Rhea" id="RHEA-COMP:10651"/>
        <dbReference type="ChEBI" id="CHEBI:15378"/>
        <dbReference type="ChEBI" id="CHEBI:30013"/>
        <dbReference type="ChEBI" id="CHEBI:33019"/>
        <dbReference type="ChEBI" id="CHEBI:43474"/>
        <dbReference type="ChEBI" id="CHEBI:61977"/>
        <dbReference type="ChEBI" id="CHEBI:83586"/>
        <dbReference type="EC" id="2.7.4.27"/>
    </reaction>
</comment>
<comment type="similarity">
    <text evidence="1">Belongs to the pyruvate, phosphate/water dikinase regulatory protein family. PDRP subfamily.</text>
</comment>